<dbReference type="EMBL" id="X84735">
    <property type="protein sequence ID" value="CAA59226.1"/>
    <property type="molecule type" value="Genomic_DNA"/>
</dbReference>
<dbReference type="SMR" id="Q88891"/>
<dbReference type="KEGG" id="vg:944408"/>
<dbReference type="OrthoDB" id="24090at10239"/>
<dbReference type="Proteomes" id="UP000007068">
    <property type="component" value="Genome"/>
</dbReference>
<dbReference type="GO" id="GO:0020002">
    <property type="term" value="C:host cell plasma membrane"/>
    <property type="evidence" value="ECO:0007669"/>
    <property type="project" value="UniProtKB-SubCell"/>
</dbReference>
<dbReference type="GO" id="GO:0016020">
    <property type="term" value="C:membrane"/>
    <property type="evidence" value="ECO:0007669"/>
    <property type="project" value="UniProtKB-KW"/>
</dbReference>
<dbReference type="GO" id="GO:0052170">
    <property type="term" value="P:symbiont-mediated suppression of host innate immune response"/>
    <property type="evidence" value="ECO:0007669"/>
    <property type="project" value="UniProtKB-KW"/>
</dbReference>
<dbReference type="InterPro" id="IPR002488">
    <property type="entry name" value="Gemini_C4"/>
</dbReference>
<dbReference type="Pfam" id="PF01492">
    <property type="entry name" value="Gemini_C4"/>
    <property type="match status" value="1"/>
</dbReference>
<name>AC4_TPCTV</name>
<keyword id="KW-1032">Host cell membrane</keyword>
<keyword id="KW-1043">Host membrane</keyword>
<keyword id="KW-0945">Host-virus interaction</keyword>
<keyword id="KW-1090">Inhibition of host innate immune response by virus</keyword>
<keyword id="KW-0449">Lipoprotein</keyword>
<keyword id="KW-0472">Membrane</keyword>
<keyword id="KW-0519">Myristate</keyword>
<keyword id="KW-1185">Reference proteome</keyword>
<keyword id="KW-0941">Suppressor of RNA silencing</keyword>
<keyword id="KW-0899">Viral immunoevasion</keyword>
<proteinExistence type="inferred from homology"/>
<feature type="initiator methionine" description="Removed" evidence="1">
    <location>
        <position position="1"/>
    </location>
</feature>
<feature type="chain" id="PRO_0000323705" description="Protein C4">
    <location>
        <begin position="2"/>
        <end position="85"/>
    </location>
</feature>
<feature type="region of interest" description="Disordered" evidence="2">
    <location>
        <begin position="42"/>
        <end position="65"/>
    </location>
</feature>
<feature type="compositionally biased region" description="Low complexity" evidence="2">
    <location>
        <begin position="44"/>
        <end position="59"/>
    </location>
</feature>
<feature type="lipid moiety-binding region" description="N-myristoyl glycine; by host" evidence="1">
    <location>
        <position position="2"/>
    </location>
</feature>
<gene>
    <name type="ORF">C4</name>
    <name type="ORF">L4</name>
</gene>
<reference key="1">
    <citation type="journal article" date="1996" name="Virology">
        <title>Analysis of the nucleotide sequence of the treehopper-transmitted geminivirus, tomato pseudo-curly top virus, suggests a recombinant origin.</title>
        <authorList>
            <person name="Briddon R.W."/>
            <person name="Bedford I.D."/>
            <person name="Tsai J.H."/>
            <person name="Markham P.G."/>
        </authorList>
    </citation>
    <scope>NUCLEOTIDE SEQUENCE [GENOMIC DNA]</scope>
</reference>
<protein>
    <recommendedName>
        <fullName>Protein C4</fullName>
    </recommendedName>
    <alternativeName>
        <fullName>Protein L4</fullName>
    </alternativeName>
</protein>
<organismHost>
    <name type="scientific">Solanum lycopersicum</name>
    <name type="common">Tomato</name>
    <name type="synonym">Lycopersicon esculentum</name>
    <dbReference type="NCBI Taxonomy" id="4081"/>
</organismHost>
<organismHost>
    <name type="scientific">Solanum nigrum</name>
    <name type="common">Black nightshade</name>
    <dbReference type="NCBI Taxonomy" id="4112"/>
</organismHost>
<comment type="function">
    <text evidence="1">Pathogenicity determinant (By similarity). May act as a suppressor of RNA-mediated gene silencing, also known as post-transcriptional gene silencing (PTGS), a mechanism of plant viral defense that limits the accumulation of viral RNAs.</text>
</comment>
<comment type="subcellular location">
    <subcellularLocation>
        <location evidence="1">Host cell membrane</location>
        <topology evidence="1">Lipid-anchor</topology>
    </subcellularLocation>
    <text evidence="1">Localizes to the cell periphery.</text>
</comment>
<comment type="similarity">
    <text evidence="3">Belongs to the geminiviridae protein AC4/C4 family.</text>
</comment>
<evidence type="ECO:0000250" key="1"/>
<evidence type="ECO:0000256" key="2">
    <source>
        <dbReference type="SAM" id="MobiDB-lite"/>
    </source>
</evidence>
<evidence type="ECO:0000305" key="3"/>
<accession>Q88891</accession>
<sequence length="85" mass="9456">MGNLISMCLYNSKGNSTAKINDSSTWYPQPGQHISIRTYRELNPAPTSTPTSTRTETLSNGENSRLTLDLLEEASRQLTTNVQRP</sequence>
<organism>
    <name type="scientific">Tomato pseudo-curly top virus</name>
    <name type="common">TPCTV</name>
    <dbReference type="NCBI Taxonomy" id="49267"/>
    <lineage>
        <taxon>Viruses</taxon>
        <taxon>Monodnaviria</taxon>
        <taxon>Shotokuvirae</taxon>
        <taxon>Cressdnaviricota</taxon>
        <taxon>Repensiviricetes</taxon>
        <taxon>Geplafuvirales</taxon>
        <taxon>Geminiviridae</taxon>
        <taxon>Topocuvirus</taxon>
    </lineage>
</organism>